<proteinExistence type="inferred from homology"/>
<accession>A6WUF6</accession>
<feature type="chain" id="PRO_1000011229" description="Phosphopantetheine adenylyltransferase">
    <location>
        <begin position="1"/>
        <end position="163"/>
    </location>
</feature>
<feature type="binding site" evidence="1">
    <location>
        <begin position="10"/>
        <end position="11"/>
    </location>
    <ligand>
        <name>ATP</name>
        <dbReference type="ChEBI" id="CHEBI:30616"/>
    </ligand>
</feature>
<feature type="binding site" evidence="1">
    <location>
        <position position="10"/>
    </location>
    <ligand>
        <name>substrate</name>
    </ligand>
</feature>
<feature type="binding site" evidence="1">
    <location>
        <position position="18"/>
    </location>
    <ligand>
        <name>ATP</name>
        <dbReference type="ChEBI" id="CHEBI:30616"/>
    </ligand>
</feature>
<feature type="binding site" evidence="1">
    <location>
        <position position="42"/>
    </location>
    <ligand>
        <name>substrate</name>
    </ligand>
</feature>
<feature type="binding site" evidence="1">
    <location>
        <position position="74"/>
    </location>
    <ligand>
        <name>substrate</name>
    </ligand>
</feature>
<feature type="binding site" evidence="1">
    <location>
        <position position="88"/>
    </location>
    <ligand>
        <name>substrate</name>
    </ligand>
</feature>
<feature type="binding site" evidence="1">
    <location>
        <begin position="89"/>
        <end position="91"/>
    </location>
    <ligand>
        <name>ATP</name>
        <dbReference type="ChEBI" id="CHEBI:30616"/>
    </ligand>
</feature>
<feature type="binding site" evidence="1">
    <location>
        <position position="99"/>
    </location>
    <ligand>
        <name>ATP</name>
        <dbReference type="ChEBI" id="CHEBI:30616"/>
    </ligand>
</feature>
<feature type="binding site" evidence="1">
    <location>
        <begin position="124"/>
        <end position="130"/>
    </location>
    <ligand>
        <name>ATP</name>
        <dbReference type="ChEBI" id="CHEBI:30616"/>
    </ligand>
</feature>
<feature type="site" description="Transition state stabilizer" evidence="1">
    <location>
        <position position="18"/>
    </location>
</feature>
<dbReference type="EC" id="2.7.7.3" evidence="1"/>
<dbReference type="EMBL" id="CP000753">
    <property type="protein sequence ID" value="ABS10445.1"/>
    <property type="molecule type" value="Genomic_DNA"/>
</dbReference>
<dbReference type="RefSeq" id="WP_012090652.1">
    <property type="nucleotide sequence ID" value="NC_009665.1"/>
</dbReference>
<dbReference type="SMR" id="A6WUF6"/>
<dbReference type="KEGG" id="sbm:Shew185_4331"/>
<dbReference type="HOGENOM" id="CLU_100149_0_1_6"/>
<dbReference type="UniPathway" id="UPA00241">
    <property type="reaction ID" value="UER00355"/>
</dbReference>
<dbReference type="GO" id="GO:0005737">
    <property type="term" value="C:cytoplasm"/>
    <property type="evidence" value="ECO:0007669"/>
    <property type="project" value="UniProtKB-SubCell"/>
</dbReference>
<dbReference type="GO" id="GO:0005524">
    <property type="term" value="F:ATP binding"/>
    <property type="evidence" value="ECO:0007669"/>
    <property type="project" value="UniProtKB-KW"/>
</dbReference>
<dbReference type="GO" id="GO:0004595">
    <property type="term" value="F:pantetheine-phosphate adenylyltransferase activity"/>
    <property type="evidence" value="ECO:0007669"/>
    <property type="project" value="UniProtKB-UniRule"/>
</dbReference>
<dbReference type="GO" id="GO:0015937">
    <property type="term" value="P:coenzyme A biosynthetic process"/>
    <property type="evidence" value="ECO:0007669"/>
    <property type="project" value="UniProtKB-UniRule"/>
</dbReference>
<dbReference type="CDD" id="cd02163">
    <property type="entry name" value="PPAT"/>
    <property type="match status" value="1"/>
</dbReference>
<dbReference type="FunFam" id="3.40.50.620:FF:000012">
    <property type="entry name" value="Phosphopantetheine adenylyltransferase"/>
    <property type="match status" value="1"/>
</dbReference>
<dbReference type="Gene3D" id="3.40.50.620">
    <property type="entry name" value="HUPs"/>
    <property type="match status" value="1"/>
</dbReference>
<dbReference type="HAMAP" id="MF_00151">
    <property type="entry name" value="PPAT_bact"/>
    <property type="match status" value="1"/>
</dbReference>
<dbReference type="InterPro" id="IPR004821">
    <property type="entry name" value="Cyt_trans-like"/>
</dbReference>
<dbReference type="InterPro" id="IPR001980">
    <property type="entry name" value="PPAT"/>
</dbReference>
<dbReference type="InterPro" id="IPR014729">
    <property type="entry name" value="Rossmann-like_a/b/a_fold"/>
</dbReference>
<dbReference type="NCBIfam" id="TIGR01510">
    <property type="entry name" value="coaD_prev_kdtB"/>
    <property type="match status" value="1"/>
</dbReference>
<dbReference type="NCBIfam" id="TIGR00125">
    <property type="entry name" value="cyt_tran_rel"/>
    <property type="match status" value="1"/>
</dbReference>
<dbReference type="PANTHER" id="PTHR21342">
    <property type="entry name" value="PHOSPHOPANTETHEINE ADENYLYLTRANSFERASE"/>
    <property type="match status" value="1"/>
</dbReference>
<dbReference type="PANTHER" id="PTHR21342:SF1">
    <property type="entry name" value="PHOSPHOPANTETHEINE ADENYLYLTRANSFERASE"/>
    <property type="match status" value="1"/>
</dbReference>
<dbReference type="Pfam" id="PF01467">
    <property type="entry name" value="CTP_transf_like"/>
    <property type="match status" value="1"/>
</dbReference>
<dbReference type="PRINTS" id="PR01020">
    <property type="entry name" value="LPSBIOSNTHSS"/>
</dbReference>
<dbReference type="SUPFAM" id="SSF52374">
    <property type="entry name" value="Nucleotidylyl transferase"/>
    <property type="match status" value="1"/>
</dbReference>
<comment type="function">
    <text evidence="1">Reversibly transfers an adenylyl group from ATP to 4'-phosphopantetheine, yielding dephospho-CoA (dPCoA) and pyrophosphate.</text>
</comment>
<comment type="catalytic activity">
    <reaction evidence="1">
        <text>(R)-4'-phosphopantetheine + ATP + H(+) = 3'-dephospho-CoA + diphosphate</text>
        <dbReference type="Rhea" id="RHEA:19801"/>
        <dbReference type="ChEBI" id="CHEBI:15378"/>
        <dbReference type="ChEBI" id="CHEBI:30616"/>
        <dbReference type="ChEBI" id="CHEBI:33019"/>
        <dbReference type="ChEBI" id="CHEBI:57328"/>
        <dbReference type="ChEBI" id="CHEBI:61723"/>
        <dbReference type="EC" id="2.7.7.3"/>
    </reaction>
</comment>
<comment type="cofactor">
    <cofactor evidence="1">
        <name>Mg(2+)</name>
        <dbReference type="ChEBI" id="CHEBI:18420"/>
    </cofactor>
</comment>
<comment type="pathway">
    <text evidence="1">Cofactor biosynthesis; coenzyme A biosynthesis; CoA from (R)-pantothenate: step 4/5.</text>
</comment>
<comment type="subunit">
    <text evidence="1">Homohexamer.</text>
</comment>
<comment type="subcellular location">
    <subcellularLocation>
        <location evidence="1">Cytoplasm</location>
    </subcellularLocation>
</comment>
<comment type="similarity">
    <text evidence="1">Belongs to the bacterial CoaD family.</text>
</comment>
<gene>
    <name evidence="1" type="primary">coaD</name>
    <name type="ordered locus">Shew185_4331</name>
</gene>
<sequence length="163" mass="17980">MHTRAIYPGTFDPITNGHADLIERAAKLFKHVIIGIAANPSKQPRFTLEERVELVNRVTAHLDNVEVVGFSGLLVDFAKEQKASVLVRGLRAVSDFEYEFQLANMNRRLSPDLESVFLTPAEENSFISSTLVKEVALHGGDVNQFVHSEVATALAAKLKLAKP</sequence>
<reference key="1">
    <citation type="submission" date="2007-07" db="EMBL/GenBank/DDBJ databases">
        <title>Complete sequence of chromosome of Shewanella baltica OS185.</title>
        <authorList>
            <consortium name="US DOE Joint Genome Institute"/>
            <person name="Copeland A."/>
            <person name="Lucas S."/>
            <person name="Lapidus A."/>
            <person name="Barry K."/>
            <person name="Glavina del Rio T."/>
            <person name="Dalin E."/>
            <person name="Tice H."/>
            <person name="Pitluck S."/>
            <person name="Sims D."/>
            <person name="Brettin T."/>
            <person name="Bruce D."/>
            <person name="Detter J.C."/>
            <person name="Han C."/>
            <person name="Schmutz J."/>
            <person name="Larimer F."/>
            <person name="Land M."/>
            <person name="Hauser L."/>
            <person name="Kyrpides N."/>
            <person name="Mikhailova N."/>
            <person name="Brettar I."/>
            <person name="Rodrigues J."/>
            <person name="Konstantinidis K."/>
            <person name="Tiedje J."/>
            <person name="Richardson P."/>
        </authorList>
    </citation>
    <scope>NUCLEOTIDE SEQUENCE [LARGE SCALE GENOMIC DNA]</scope>
    <source>
        <strain>OS185</strain>
    </source>
</reference>
<keyword id="KW-0067">ATP-binding</keyword>
<keyword id="KW-0173">Coenzyme A biosynthesis</keyword>
<keyword id="KW-0963">Cytoplasm</keyword>
<keyword id="KW-0460">Magnesium</keyword>
<keyword id="KW-0547">Nucleotide-binding</keyword>
<keyword id="KW-0548">Nucleotidyltransferase</keyword>
<keyword id="KW-0808">Transferase</keyword>
<evidence type="ECO:0000255" key="1">
    <source>
        <dbReference type="HAMAP-Rule" id="MF_00151"/>
    </source>
</evidence>
<name>COAD_SHEB8</name>
<organism>
    <name type="scientific">Shewanella baltica (strain OS185)</name>
    <dbReference type="NCBI Taxonomy" id="402882"/>
    <lineage>
        <taxon>Bacteria</taxon>
        <taxon>Pseudomonadati</taxon>
        <taxon>Pseudomonadota</taxon>
        <taxon>Gammaproteobacteria</taxon>
        <taxon>Alteromonadales</taxon>
        <taxon>Shewanellaceae</taxon>
        <taxon>Shewanella</taxon>
    </lineage>
</organism>
<protein>
    <recommendedName>
        <fullName evidence="1">Phosphopantetheine adenylyltransferase</fullName>
        <ecNumber evidence="1">2.7.7.3</ecNumber>
    </recommendedName>
    <alternativeName>
        <fullName evidence="1">Dephospho-CoA pyrophosphorylase</fullName>
    </alternativeName>
    <alternativeName>
        <fullName evidence="1">Pantetheine-phosphate adenylyltransferase</fullName>
        <shortName evidence="1">PPAT</shortName>
    </alternativeName>
</protein>